<name>GSA1_BACC1</name>
<comment type="catalytic activity">
    <reaction evidence="1">
        <text>(S)-4-amino-5-oxopentanoate = 5-aminolevulinate</text>
        <dbReference type="Rhea" id="RHEA:14265"/>
        <dbReference type="ChEBI" id="CHEBI:57501"/>
        <dbReference type="ChEBI" id="CHEBI:356416"/>
        <dbReference type="EC" id="5.4.3.8"/>
    </reaction>
</comment>
<comment type="cofactor">
    <cofactor evidence="1">
        <name>pyridoxal 5'-phosphate</name>
        <dbReference type="ChEBI" id="CHEBI:597326"/>
    </cofactor>
</comment>
<comment type="pathway">
    <text evidence="1">Porphyrin-containing compound metabolism; protoporphyrin-IX biosynthesis; 5-aminolevulinate from L-glutamyl-tRNA(Glu): step 2/2.</text>
</comment>
<comment type="subunit">
    <text evidence="1">Homodimer.</text>
</comment>
<comment type="subcellular location">
    <subcellularLocation>
        <location evidence="1">Cytoplasm</location>
    </subcellularLocation>
</comment>
<comment type="similarity">
    <text evidence="1">Belongs to the class-III pyridoxal-phosphate-dependent aminotransferase family. HemL subfamily.</text>
</comment>
<protein>
    <recommendedName>
        <fullName evidence="1">Glutamate-1-semialdehyde 2,1-aminomutase 1</fullName>
        <shortName evidence="1">GSA 1</shortName>
        <ecNumber evidence="1">5.4.3.8</ecNumber>
    </recommendedName>
    <alternativeName>
        <fullName evidence="1">Glutamate-1-semialdehyde aminotransferase 1</fullName>
        <shortName evidence="1">GSA-AT 1</shortName>
    </alternativeName>
</protein>
<keyword id="KW-0963">Cytoplasm</keyword>
<keyword id="KW-0413">Isomerase</keyword>
<keyword id="KW-0627">Porphyrin biosynthesis</keyword>
<keyword id="KW-0663">Pyridoxal phosphate</keyword>
<feature type="chain" id="PRO_0000243538" description="Glutamate-1-semialdehyde 2,1-aminomutase 1">
    <location>
        <begin position="1"/>
        <end position="434"/>
    </location>
</feature>
<feature type="modified residue" description="N6-(pyridoxal phosphate)lysine" evidence="1">
    <location>
        <position position="270"/>
    </location>
</feature>
<sequence>MVVKFTKSEALHKEALEHIVGGVNSPSRSFKAVGGGAPVAMERGKGAYFWDVDGNKYIDYLAAYGPIITGHAHPHITKAITTAAENGVLYGTPTALEVKFAKMLKEAMPALDKVRFVNSGTEAVMTTIRVARAYTGRTKIMKFAGCYHGHSDLVLVAAGSGPSTLGTPDSAGVPQSIAQEVITVPFNNVETLKEALDKWGHEVAAILVEPIVGNFGIVEPKTGFLEKVNELVHEAGALVIYDEVITAFRFMYGGAQDLLGVTPDLTALGKVIGGGLPIGAYGGKKEIMEQVAPLGPAYQAGTMAGNPASMASGIACLEVLQQEGLYEKLDELGAMLEKGILEQAEKHNIDITLNRLKGALTVYFTTNTIEDYDAAQDTDGEMFGKFFKLMLQEGINLAPSKYEAWFLTTEHTKEDIEYTIEAVGRAFAALANNK</sequence>
<accession>Q73DX4</accession>
<evidence type="ECO:0000255" key="1">
    <source>
        <dbReference type="HAMAP-Rule" id="MF_00375"/>
    </source>
</evidence>
<reference key="1">
    <citation type="journal article" date="2004" name="Nucleic Acids Res.">
        <title>The genome sequence of Bacillus cereus ATCC 10987 reveals metabolic adaptations and a large plasmid related to Bacillus anthracis pXO1.</title>
        <authorList>
            <person name="Rasko D.A."/>
            <person name="Ravel J."/>
            <person name="Oekstad O.A."/>
            <person name="Helgason E."/>
            <person name="Cer R.Z."/>
            <person name="Jiang L."/>
            <person name="Shores K.A."/>
            <person name="Fouts D.E."/>
            <person name="Tourasse N.J."/>
            <person name="Angiuoli S.V."/>
            <person name="Kolonay J.F."/>
            <person name="Nelson W.C."/>
            <person name="Kolstoe A.-B."/>
            <person name="Fraser C.M."/>
            <person name="Read T.D."/>
        </authorList>
    </citation>
    <scope>NUCLEOTIDE SEQUENCE [LARGE SCALE GENOMIC DNA]</scope>
    <source>
        <strain>ATCC 10987 / NRS 248</strain>
    </source>
</reference>
<gene>
    <name evidence="1" type="primary">hemL1</name>
    <name type="ordered locus">BCE_0586</name>
</gene>
<dbReference type="EC" id="5.4.3.8" evidence="1"/>
<dbReference type="EMBL" id="AE017194">
    <property type="protein sequence ID" value="AAS39521.1"/>
    <property type="molecule type" value="Genomic_DNA"/>
</dbReference>
<dbReference type="SMR" id="Q73DX4"/>
<dbReference type="KEGG" id="bca:BCE_0586"/>
<dbReference type="HOGENOM" id="CLU_016922_1_5_9"/>
<dbReference type="UniPathway" id="UPA00251">
    <property type="reaction ID" value="UER00317"/>
</dbReference>
<dbReference type="Proteomes" id="UP000002527">
    <property type="component" value="Chromosome"/>
</dbReference>
<dbReference type="GO" id="GO:0005737">
    <property type="term" value="C:cytoplasm"/>
    <property type="evidence" value="ECO:0007669"/>
    <property type="project" value="UniProtKB-SubCell"/>
</dbReference>
<dbReference type="GO" id="GO:0042286">
    <property type="term" value="F:glutamate-1-semialdehyde 2,1-aminomutase activity"/>
    <property type="evidence" value="ECO:0007669"/>
    <property type="project" value="UniProtKB-UniRule"/>
</dbReference>
<dbReference type="GO" id="GO:0030170">
    <property type="term" value="F:pyridoxal phosphate binding"/>
    <property type="evidence" value="ECO:0007669"/>
    <property type="project" value="InterPro"/>
</dbReference>
<dbReference type="GO" id="GO:0008483">
    <property type="term" value="F:transaminase activity"/>
    <property type="evidence" value="ECO:0007669"/>
    <property type="project" value="InterPro"/>
</dbReference>
<dbReference type="GO" id="GO:0006782">
    <property type="term" value="P:protoporphyrinogen IX biosynthetic process"/>
    <property type="evidence" value="ECO:0007669"/>
    <property type="project" value="UniProtKB-UniRule"/>
</dbReference>
<dbReference type="CDD" id="cd00610">
    <property type="entry name" value="OAT_like"/>
    <property type="match status" value="1"/>
</dbReference>
<dbReference type="FunFam" id="3.40.640.10:FF:000021">
    <property type="entry name" value="Glutamate-1-semialdehyde 2,1-aminomutase"/>
    <property type="match status" value="1"/>
</dbReference>
<dbReference type="Gene3D" id="3.90.1150.10">
    <property type="entry name" value="Aspartate Aminotransferase, domain 1"/>
    <property type="match status" value="1"/>
</dbReference>
<dbReference type="Gene3D" id="3.40.640.10">
    <property type="entry name" value="Type I PLP-dependent aspartate aminotransferase-like (Major domain)"/>
    <property type="match status" value="1"/>
</dbReference>
<dbReference type="HAMAP" id="MF_00375">
    <property type="entry name" value="HemL_aminotrans_3"/>
    <property type="match status" value="1"/>
</dbReference>
<dbReference type="InterPro" id="IPR004639">
    <property type="entry name" value="4pyrrol_synth_GluAld_NH2Trfase"/>
</dbReference>
<dbReference type="InterPro" id="IPR005814">
    <property type="entry name" value="Aminotrans_3"/>
</dbReference>
<dbReference type="InterPro" id="IPR049704">
    <property type="entry name" value="Aminotrans_3_PPA_site"/>
</dbReference>
<dbReference type="InterPro" id="IPR015424">
    <property type="entry name" value="PyrdxlP-dep_Trfase"/>
</dbReference>
<dbReference type="InterPro" id="IPR015421">
    <property type="entry name" value="PyrdxlP-dep_Trfase_major"/>
</dbReference>
<dbReference type="InterPro" id="IPR015422">
    <property type="entry name" value="PyrdxlP-dep_Trfase_small"/>
</dbReference>
<dbReference type="NCBIfam" id="TIGR00713">
    <property type="entry name" value="hemL"/>
    <property type="match status" value="1"/>
</dbReference>
<dbReference type="NCBIfam" id="NF000818">
    <property type="entry name" value="PRK00062.1"/>
    <property type="match status" value="1"/>
</dbReference>
<dbReference type="NCBIfam" id="NF009055">
    <property type="entry name" value="PRK12389.1"/>
    <property type="match status" value="1"/>
</dbReference>
<dbReference type="PANTHER" id="PTHR43713">
    <property type="entry name" value="GLUTAMATE-1-SEMIALDEHYDE 2,1-AMINOMUTASE"/>
    <property type="match status" value="1"/>
</dbReference>
<dbReference type="PANTHER" id="PTHR43713:SF1">
    <property type="entry name" value="GLUTAMATE-1-SEMIALDEHYDE 2,1-AMINOMUTASE 2"/>
    <property type="match status" value="1"/>
</dbReference>
<dbReference type="Pfam" id="PF00202">
    <property type="entry name" value="Aminotran_3"/>
    <property type="match status" value="1"/>
</dbReference>
<dbReference type="SUPFAM" id="SSF53383">
    <property type="entry name" value="PLP-dependent transferases"/>
    <property type="match status" value="1"/>
</dbReference>
<dbReference type="PROSITE" id="PS00600">
    <property type="entry name" value="AA_TRANSFER_CLASS_3"/>
    <property type="match status" value="1"/>
</dbReference>
<organism>
    <name type="scientific">Bacillus cereus (strain ATCC 10987 / NRS 248)</name>
    <dbReference type="NCBI Taxonomy" id="222523"/>
    <lineage>
        <taxon>Bacteria</taxon>
        <taxon>Bacillati</taxon>
        <taxon>Bacillota</taxon>
        <taxon>Bacilli</taxon>
        <taxon>Bacillales</taxon>
        <taxon>Bacillaceae</taxon>
        <taxon>Bacillus</taxon>
        <taxon>Bacillus cereus group</taxon>
    </lineage>
</organism>
<proteinExistence type="inferred from homology"/>